<comment type="function">
    <text>Sarcotoxin II is an antibacterial protein which plays a role in the inflammatory response of this insect. The main effect of sarcotoxin II on E.coli may be the inhibition of cell wall synthesis, including septum formation.</text>
</comment>
<comment type="subcellular location">
    <subcellularLocation>
        <location>Secreted</location>
    </subcellularLocation>
</comment>
<comment type="tissue specificity">
    <text>Synthesized by the fat body and is eventually secreted into the hemolymph.</text>
</comment>
<comment type="induction">
    <text>In response to injury of the body wall of the larvae.</text>
</comment>
<comment type="miscellaneous">
    <text>Sarcotoxin II consists of at least four structurally related proteins named sarcotoxin IIa, II-1, II-2, and II-3.</text>
</comment>
<comment type="similarity">
    <text evidence="3">Belongs to the attacin/sarcotoxin-2 family.</text>
</comment>
<protein>
    <recommendedName>
        <fullName>Sarcotoxin II-2</fullName>
    </recommendedName>
</protein>
<evidence type="ECO:0000250" key="1"/>
<evidence type="ECO:0000255" key="2"/>
<evidence type="ECO:0000305" key="3"/>
<organism>
    <name type="scientific">Sarcophaga peregrina</name>
    <name type="common">Flesh fly</name>
    <name type="synonym">Boettcherisca peregrina</name>
    <dbReference type="NCBI Taxonomy" id="7386"/>
    <lineage>
        <taxon>Eukaryota</taxon>
        <taxon>Metazoa</taxon>
        <taxon>Ecdysozoa</taxon>
        <taxon>Arthropoda</taxon>
        <taxon>Hexapoda</taxon>
        <taxon>Insecta</taxon>
        <taxon>Pterygota</taxon>
        <taxon>Neoptera</taxon>
        <taxon>Endopterygota</taxon>
        <taxon>Diptera</taxon>
        <taxon>Brachycera</taxon>
        <taxon>Muscomorpha</taxon>
        <taxon>Oestroidea</taxon>
        <taxon>Sarcophagidae</taxon>
        <taxon>Sarcophaga</taxon>
        <taxon>Boettcherisca</taxon>
    </lineage>
</organism>
<keyword id="KW-0027">Amidation</keyword>
<keyword id="KW-0044">Antibiotic</keyword>
<keyword id="KW-0929">Antimicrobial</keyword>
<keyword id="KW-0391">Immunity</keyword>
<keyword id="KW-0399">Innate immunity</keyword>
<keyword id="KW-0873">Pyrrolidone carboxylic acid</keyword>
<keyword id="KW-0677">Repeat</keyword>
<keyword id="KW-0964">Secreted</keyword>
<keyword id="KW-0732">Signal</keyword>
<sequence length="294" mass="30856">MKSFVFFAACFAIVALNSLAHAYPQKLPVPIPPPTNPPVAAFHNSVATNSKGGQDVSVKLAATNLGNKHVQPIAEVFAKGNTQGGNVLRGATVGVQGHGLGASVTKTQDGIAESFRKQAEANLRLGDSASLIGKVSQTDTKIKGIDFKPQLSSSSLALQGDRLGASISRDVNRGVSDTLTKSISANVFRNDNHNLDASVFRSDVRQNNGFNFQKTGGMLDYSHANGHGLNAGLTRFSGIGNQANVGGYSTLFRSNDGLTSLKANAGGSQWLSGPFANQRDYSFGLGLSHNAWRG</sequence>
<proteinExistence type="evidence at transcript level"/>
<dbReference type="EMBL" id="D90154">
    <property type="protein sequence ID" value="BAA14183.1"/>
    <property type="molecule type" value="Genomic_DNA"/>
</dbReference>
<dbReference type="PIR" id="B36351">
    <property type="entry name" value="B36351"/>
</dbReference>
<dbReference type="SMR" id="P24489"/>
<dbReference type="GO" id="GO:0005576">
    <property type="term" value="C:extracellular region"/>
    <property type="evidence" value="ECO:0007669"/>
    <property type="project" value="UniProtKB-SubCell"/>
</dbReference>
<dbReference type="GO" id="GO:0042742">
    <property type="term" value="P:defense response to bacterium"/>
    <property type="evidence" value="ECO:0007669"/>
    <property type="project" value="UniProtKB-KW"/>
</dbReference>
<dbReference type="GO" id="GO:0045087">
    <property type="term" value="P:innate immune response"/>
    <property type="evidence" value="ECO:0007669"/>
    <property type="project" value="UniProtKB-KW"/>
</dbReference>
<dbReference type="InterPro" id="IPR005521">
    <property type="entry name" value="Attacin_C"/>
</dbReference>
<dbReference type="InterPro" id="IPR005520">
    <property type="entry name" value="Attacin_N"/>
</dbReference>
<dbReference type="Pfam" id="PF03769">
    <property type="entry name" value="Attacin_C"/>
    <property type="match status" value="1"/>
</dbReference>
<dbReference type="Pfam" id="PF03768">
    <property type="entry name" value="Attacin_N"/>
    <property type="match status" value="1"/>
</dbReference>
<accession>P24489</accession>
<feature type="signal peptide" evidence="1">
    <location>
        <begin position="1"/>
        <end position="22"/>
    </location>
</feature>
<feature type="propeptide" id="PRO_0000004887" description="Removed by a dipeptidylpeptidase">
    <location>
        <begin position="23"/>
        <end position="24"/>
    </location>
</feature>
<feature type="chain" id="PRO_0000004888" description="Sarcotoxin II-2">
    <location>
        <begin position="25"/>
        <end position="293"/>
    </location>
</feature>
<feature type="modified residue" description="Pyrrolidone carboxylic acid" evidence="1">
    <location>
        <position position="25"/>
    </location>
</feature>
<feature type="modified residue" description="Arginine amide" evidence="2">
    <location>
        <position position="293"/>
    </location>
</feature>
<reference key="1">
    <citation type="journal article" date="1990" name="Mol. Cell. Biol.">
        <title>Analysis of a gene cluster for sarcotoxin II, a group of antibacterial proteins of Sarcophaga peregrina.</title>
        <authorList>
            <person name="Kanai A."/>
            <person name="Natori S."/>
        </authorList>
    </citation>
    <scope>NUCLEOTIDE SEQUENCE [GENOMIC DNA]</scope>
</reference>
<name>SRX22_SARPE</name>